<sequence length="309" mass="34889">MTSDVTVGPAPGQYQLSHLRLLEAEAIHVIREVAAEFERPVLLFSGGKDSIVMLHLALKAFRPGRLPFPVMHVDTGHNFDEVIATRDELVAAAGVRLVVASVQDDIDAGRVVETIPSRNPIQTVTLLRAIRENQFDAAFGGARRDEEKARAKERVFSFRDEFGQWDPKAQRPELWNLYNGRHHKGEHIRVFPLSNWTEFDIWSYIGAEQVRLPSIYFAHRRKVFQRDGMLLAVHRHMQPRADEPVFEATVRFRTVGDVTCTGCVESSASTVAEVIAETAVARLTERGATRADDRISEAGMEDRKRQGYF</sequence>
<evidence type="ECO:0000255" key="1">
    <source>
        <dbReference type="HAMAP-Rule" id="MF_00064"/>
    </source>
</evidence>
<evidence type="ECO:0000305" key="2"/>
<name>CYSD_MYCBP</name>
<proteinExistence type="inferred from homology"/>
<protein>
    <recommendedName>
        <fullName evidence="1">Sulfate adenylyltransferase subunit 2</fullName>
        <ecNumber evidence="1">2.7.7.4</ecNumber>
    </recommendedName>
    <alternativeName>
        <fullName evidence="1">ATP-sulfurylase small subunit</fullName>
    </alternativeName>
    <alternativeName>
        <fullName evidence="1">Sulfate adenylate transferase</fullName>
        <shortName evidence="1">SAT</shortName>
    </alternativeName>
</protein>
<keyword id="KW-0067">ATP-binding</keyword>
<keyword id="KW-0547">Nucleotide-binding</keyword>
<keyword id="KW-0548">Nucleotidyltransferase</keyword>
<keyword id="KW-0808">Transferase</keyword>
<accession>A1KI72</accession>
<comment type="function">
    <text evidence="1">With CysN forms the ATP sulfurylase (ATPS) that catalyzes the adenylation of sulfate producing adenosine 5'-phosphosulfate (APS) and diphosphate, the first enzymatic step in sulfur assimilation pathway. APS synthesis involves the formation of a high-energy phosphoric-sulfuric acid anhydride bond driven by GTP hydrolysis by CysN coupled to ATP hydrolysis by CysD.</text>
</comment>
<comment type="catalytic activity">
    <reaction evidence="1">
        <text>sulfate + ATP + H(+) = adenosine 5'-phosphosulfate + diphosphate</text>
        <dbReference type="Rhea" id="RHEA:18133"/>
        <dbReference type="ChEBI" id="CHEBI:15378"/>
        <dbReference type="ChEBI" id="CHEBI:16189"/>
        <dbReference type="ChEBI" id="CHEBI:30616"/>
        <dbReference type="ChEBI" id="CHEBI:33019"/>
        <dbReference type="ChEBI" id="CHEBI:58243"/>
        <dbReference type="EC" id="2.7.7.4"/>
    </reaction>
</comment>
<comment type="pathway">
    <text evidence="1">Sulfur metabolism; hydrogen sulfide biosynthesis; sulfite from sulfate: step 1/3.</text>
</comment>
<comment type="subunit">
    <text evidence="1">Heterodimer composed of CysD, the smaller subunit, and CysN.</text>
</comment>
<comment type="similarity">
    <text evidence="1">Belongs to the PAPS reductase family. CysD subfamily.</text>
</comment>
<comment type="sequence caution" evidence="2">
    <conflict type="erroneous initiation">
        <sequence resource="EMBL-CDS" id="CAL71331"/>
    </conflict>
</comment>
<dbReference type="EC" id="2.7.7.4" evidence="1"/>
<dbReference type="EMBL" id="AM408590">
    <property type="protein sequence ID" value="CAL71331.1"/>
    <property type="status" value="ALT_INIT"/>
    <property type="molecule type" value="Genomic_DNA"/>
</dbReference>
<dbReference type="SMR" id="A1KI72"/>
<dbReference type="KEGG" id="mbb:BCG_1344"/>
<dbReference type="HOGENOM" id="CLU_043026_0_0_11"/>
<dbReference type="UniPathway" id="UPA00140">
    <property type="reaction ID" value="UER00204"/>
</dbReference>
<dbReference type="Proteomes" id="UP000001472">
    <property type="component" value="Chromosome"/>
</dbReference>
<dbReference type="GO" id="GO:0005524">
    <property type="term" value="F:ATP binding"/>
    <property type="evidence" value="ECO:0007669"/>
    <property type="project" value="UniProtKB-KW"/>
</dbReference>
<dbReference type="GO" id="GO:0004781">
    <property type="term" value="F:sulfate adenylyltransferase (ATP) activity"/>
    <property type="evidence" value="ECO:0007669"/>
    <property type="project" value="UniProtKB-UniRule"/>
</dbReference>
<dbReference type="GO" id="GO:0070814">
    <property type="term" value="P:hydrogen sulfide biosynthetic process"/>
    <property type="evidence" value="ECO:0007669"/>
    <property type="project" value="UniProtKB-UniRule"/>
</dbReference>
<dbReference type="GO" id="GO:0000103">
    <property type="term" value="P:sulfate assimilation"/>
    <property type="evidence" value="ECO:0007669"/>
    <property type="project" value="UniProtKB-UniRule"/>
</dbReference>
<dbReference type="FunFam" id="3.40.50.620:FF:000002">
    <property type="entry name" value="Sulfate adenylyltransferase subunit 2"/>
    <property type="match status" value="1"/>
</dbReference>
<dbReference type="Gene3D" id="3.40.50.620">
    <property type="entry name" value="HUPs"/>
    <property type="match status" value="1"/>
</dbReference>
<dbReference type="HAMAP" id="MF_00064">
    <property type="entry name" value="Sulf_adenylyltr_sub2"/>
    <property type="match status" value="1"/>
</dbReference>
<dbReference type="InterPro" id="IPR002500">
    <property type="entry name" value="PAPS_reduct_dom"/>
</dbReference>
<dbReference type="InterPro" id="IPR014729">
    <property type="entry name" value="Rossmann-like_a/b/a_fold"/>
</dbReference>
<dbReference type="InterPro" id="IPR011784">
    <property type="entry name" value="SO4_adenylTrfase_ssu"/>
</dbReference>
<dbReference type="InterPro" id="IPR050128">
    <property type="entry name" value="Sulfate_adenylyltrnsfr_sub2"/>
</dbReference>
<dbReference type="NCBIfam" id="TIGR02039">
    <property type="entry name" value="CysD"/>
    <property type="match status" value="1"/>
</dbReference>
<dbReference type="NCBIfam" id="NF003587">
    <property type="entry name" value="PRK05253.1"/>
    <property type="match status" value="1"/>
</dbReference>
<dbReference type="NCBIfam" id="NF009214">
    <property type="entry name" value="PRK12563.1"/>
    <property type="match status" value="1"/>
</dbReference>
<dbReference type="PANTHER" id="PTHR43196">
    <property type="entry name" value="SULFATE ADENYLYLTRANSFERASE SUBUNIT 2"/>
    <property type="match status" value="1"/>
</dbReference>
<dbReference type="PANTHER" id="PTHR43196:SF1">
    <property type="entry name" value="SULFATE ADENYLYLTRANSFERASE SUBUNIT 2"/>
    <property type="match status" value="1"/>
</dbReference>
<dbReference type="Pfam" id="PF01507">
    <property type="entry name" value="PAPS_reduct"/>
    <property type="match status" value="1"/>
</dbReference>
<dbReference type="PIRSF" id="PIRSF002936">
    <property type="entry name" value="CysDAde_trans"/>
    <property type="match status" value="1"/>
</dbReference>
<dbReference type="SUPFAM" id="SSF52402">
    <property type="entry name" value="Adenine nucleotide alpha hydrolases-like"/>
    <property type="match status" value="1"/>
</dbReference>
<feature type="chain" id="PRO_0000340206" description="Sulfate adenylyltransferase subunit 2">
    <location>
        <begin position="1"/>
        <end position="309"/>
    </location>
</feature>
<gene>
    <name evidence="1" type="primary">cysD</name>
    <name type="ordered locus">BCG_1344</name>
</gene>
<reference key="1">
    <citation type="journal article" date="2007" name="Proc. Natl. Acad. Sci. U.S.A.">
        <title>Genome plasticity of BCG and impact on vaccine efficacy.</title>
        <authorList>
            <person name="Brosch R."/>
            <person name="Gordon S.V."/>
            <person name="Garnier T."/>
            <person name="Eiglmeier K."/>
            <person name="Frigui W."/>
            <person name="Valenti P."/>
            <person name="Dos Santos S."/>
            <person name="Duthoy S."/>
            <person name="Lacroix C."/>
            <person name="Garcia-Pelayo C."/>
            <person name="Inwald J.K."/>
            <person name="Golby P."/>
            <person name="Garcia J.N."/>
            <person name="Hewinson R.G."/>
            <person name="Behr M.A."/>
            <person name="Quail M.A."/>
            <person name="Churcher C."/>
            <person name="Barrell B.G."/>
            <person name="Parkhill J."/>
            <person name="Cole S.T."/>
        </authorList>
    </citation>
    <scope>NUCLEOTIDE SEQUENCE [LARGE SCALE GENOMIC DNA]</scope>
    <source>
        <strain>BCG / Pasteur 1173P2</strain>
    </source>
</reference>
<organism>
    <name type="scientific">Mycobacterium bovis (strain BCG / Pasteur 1173P2)</name>
    <dbReference type="NCBI Taxonomy" id="410289"/>
    <lineage>
        <taxon>Bacteria</taxon>
        <taxon>Bacillati</taxon>
        <taxon>Actinomycetota</taxon>
        <taxon>Actinomycetes</taxon>
        <taxon>Mycobacteriales</taxon>
        <taxon>Mycobacteriaceae</taxon>
        <taxon>Mycobacterium</taxon>
        <taxon>Mycobacterium tuberculosis complex</taxon>
    </lineage>
</organism>